<dbReference type="EC" id="2.1.1.198" evidence="1"/>
<dbReference type="EMBL" id="AE000512">
    <property type="protein sequence ID" value="AAD35791.1"/>
    <property type="molecule type" value="Genomic_DNA"/>
</dbReference>
<dbReference type="PIR" id="D72343">
    <property type="entry name" value="D72343"/>
</dbReference>
<dbReference type="RefSeq" id="NP_228518.1">
    <property type="nucleotide sequence ID" value="NC_000853.1"/>
</dbReference>
<dbReference type="RefSeq" id="WP_004081030.1">
    <property type="nucleotide sequence ID" value="NZ_CP011107.1"/>
</dbReference>
<dbReference type="SMR" id="Q9WZG8"/>
<dbReference type="FunCoup" id="Q9WZG8">
    <property type="interactions" value="341"/>
</dbReference>
<dbReference type="STRING" id="243274.TM_0709"/>
<dbReference type="PaxDb" id="243274-THEMA_01120"/>
<dbReference type="DNASU" id="898376"/>
<dbReference type="EnsemblBacteria" id="AAD35791">
    <property type="protein sequence ID" value="AAD35791"/>
    <property type="gene ID" value="TM_0709"/>
</dbReference>
<dbReference type="KEGG" id="tma:TM0709"/>
<dbReference type="KEGG" id="tmi:THEMA_01120"/>
<dbReference type="KEGG" id="tmm:Tmari_0709"/>
<dbReference type="KEGG" id="tmw:THMA_0724"/>
<dbReference type="eggNOG" id="COG0313">
    <property type="taxonomic scope" value="Bacteria"/>
</dbReference>
<dbReference type="InParanoid" id="Q9WZG8"/>
<dbReference type="OrthoDB" id="9809084at2"/>
<dbReference type="Proteomes" id="UP000008183">
    <property type="component" value="Chromosome"/>
</dbReference>
<dbReference type="GO" id="GO:0005737">
    <property type="term" value="C:cytoplasm"/>
    <property type="evidence" value="ECO:0007669"/>
    <property type="project" value="UniProtKB-SubCell"/>
</dbReference>
<dbReference type="GO" id="GO:0070677">
    <property type="term" value="F:rRNA (cytosine-2'-O-)-methyltransferase activity"/>
    <property type="evidence" value="ECO:0007669"/>
    <property type="project" value="UniProtKB-UniRule"/>
</dbReference>
<dbReference type="CDD" id="cd11648">
    <property type="entry name" value="RsmI"/>
    <property type="match status" value="1"/>
</dbReference>
<dbReference type="FunFam" id="3.30.950.10:FF:000002">
    <property type="entry name" value="Ribosomal RNA small subunit methyltransferase I"/>
    <property type="match status" value="1"/>
</dbReference>
<dbReference type="FunFam" id="3.40.1010.10:FF:000007">
    <property type="entry name" value="Ribosomal RNA small subunit methyltransferase I"/>
    <property type="match status" value="1"/>
</dbReference>
<dbReference type="Gene3D" id="3.40.1010.10">
    <property type="entry name" value="Cobalt-precorrin-4 Transmethylase, Domain 1"/>
    <property type="match status" value="1"/>
</dbReference>
<dbReference type="Gene3D" id="3.30.950.10">
    <property type="entry name" value="Methyltransferase, Cobalt-precorrin-4 Transmethylase, Domain 2"/>
    <property type="match status" value="1"/>
</dbReference>
<dbReference type="HAMAP" id="MF_01877">
    <property type="entry name" value="16SrRNA_methyltr_I"/>
    <property type="match status" value="1"/>
</dbReference>
<dbReference type="InterPro" id="IPR000878">
    <property type="entry name" value="4pyrrol_Mease"/>
</dbReference>
<dbReference type="InterPro" id="IPR035996">
    <property type="entry name" value="4pyrrol_Methylase_sf"/>
</dbReference>
<dbReference type="InterPro" id="IPR014777">
    <property type="entry name" value="4pyrrole_Mease_sub1"/>
</dbReference>
<dbReference type="InterPro" id="IPR014776">
    <property type="entry name" value="4pyrrole_Mease_sub2"/>
</dbReference>
<dbReference type="InterPro" id="IPR008189">
    <property type="entry name" value="rRNA_ssu_MeTfrase_I"/>
</dbReference>
<dbReference type="InterPro" id="IPR018063">
    <property type="entry name" value="SAM_MeTrfase_RsmI_CS"/>
</dbReference>
<dbReference type="NCBIfam" id="TIGR00096">
    <property type="entry name" value="16S rRNA (cytidine(1402)-2'-O)-methyltransferase"/>
    <property type="match status" value="1"/>
</dbReference>
<dbReference type="PANTHER" id="PTHR46111">
    <property type="entry name" value="RIBOSOMAL RNA SMALL SUBUNIT METHYLTRANSFERASE I"/>
    <property type="match status" value="1"/>
</dbReference>
<dbReference type="PANTHER" id="PTHR46111:SF1">
    <property type="entry name" value="RIBOSOMAL RNA SMALL SUBUNIT METHYLTRANSFERASE I"/>
    <property type="match status" value="1"/>
</dbReference>
<dbReference type="Pfam" id="PF00590">
    <property type="entry name" value="TP_methylase"/>
    <property type="match status" value="1"/>
</dbReference>
<dbReference type="PIRSF" id="PIRSF005917">
    <property type="entry name" value="MTase_YraL"/>
    <property type="match status" value="1"/>
</dbReference>
<dbReference type="SUPFAM" id="SSF53790">
    <property type="entry name" value="Tetrapyrrole methylase"/>
    <property type="match status" value="1"/>
</dbReference>
<dbReference type="PROSITE" id="PS01296">
    <property type="entry name" value="RSMI"/>
    <property type="match status" value="1"/>
</dbReference>
<gene>
    <name evidence="1" type="primary">rsmI</name>
    <name type="ordered locus">TM_0709</name>
</gene>
<organism>
    <name type="scientific">Thermotoga maritima (strain ATCC 43589 / DSM 3109 / JCM 10099 / NBRC 100826 / MSB8)</name>
    <dbReference type="NCBI Taxonomy" id="243274"/>
    <lineage>
        <taxon>Bacteria</taxon>
        <taxon>Thermotogati</taxon>
        <taxon>Thermotogota</taxon>
        <taxon>Thermotogae</taxon>
        <taxon>Thermotogales</taxon>
        <taxon>Thermotogaceae</taxon>
        <taxon>Thermotoga</taxon>
    </lineage>
</organism>
<accession>Q9WZG8</accession>
<comment type="function">
    <text evidence="1">Catalyzes the 2'-O-methylation of the ribose of cytidine 1402 (C1402) in 16S rRNA.</text>
</comment>
<comment type="catalytic activity">
    <reaction evidence="1">
        <text>cytidine(1402) in 16S rRNA + S-adenosyl-L-methionine = 2'-O-methylcytidine(1402) in 16S rRNA + S-adenosyl-L-homocysteine + H(+)</text>
        <dbReference type="Rhea" id="RHEA:42924"/>
        <dbReference type="Rhea" id="RHEA-COMP:10285"/>
        <dbReference type="Rhea" id="RHEA-COMP:10286"/>
        <dbReference type="ChEBI" id="CHEBI:15378"/>
        <dbReference type="ChEBI" id="CHEBI:57856"/>
        <dbReference type="ChEBI" id="CHEBI:59789"/>
        <dbReference type="ChEBI" id="CHEBI:74495"/>
        <dbReference type="ChEBI" id="CHEBI:82748"/>
        <dbReference type="EC" id="2.1.1.198"/>
    </reaction>
</comment>
<comment type="subcellular location">
    <subcellularLocation>
        <location evidence="1">Cytoplasm</location>
    </subcellularLocation>
</comment>
<comment type="similarity">
    <text evidence="1">Belongs to the methyltransferase superfamily. RsmI family.</text>
</comment>
<proteinExistence type="inferred from homology"/>
<protein>
    <recommendedName>
        <fullName evidence="1">Ribosomal RNA small subunit methyltransferase I</fullName>
        <ecNumber evidence="1">2.1.1.198</ecNumber>
    </recommendedName>
    <alternativeName>
        <fullName evidence="1">16S rRNA 2'-O-ribose C1402 methyltransferase</fullName>
    </alternativeName>
    <alternativeName>
        <fullName evidence="1">rRNA (cytidine-2'-O-)-methyltransferase RsmI</fullName>
    </alternativeName>
</protein>
<feature type="chain" id="PRO_0000211959" description="Ribosomal RNA small subunit methyltransferase I">
    <location>
        <begin position="1"/>
        <end position="222"/>
    </location>
</feature>
<keyword id="KW-0963">Cytoplasm</keyword>
<keyword id="KW-0489">Methyltransferase</keyword>
<keyword id="KW-1185">Reference proteome</keyword>
<keyword id="KW-0698">rRNA processing</keyword>
<keyword id="KW-0949">S-adenosyl-L-methionine</keyword>
<keyword id="KW-0808">Transferase</keyword>
<sequence>MGKLIIVGTPIGNLEDITIRALKTLREVDLILAEDTRRTMVLLNKYRIKKPLLSFNERNSKKRIKEILPLLKEGKKVAIVSDAGMPVISDPGYNLVEECWREGIEVDIVPGPSALTSAVAVSGFPGSKFIFEGFLPRGKNRRRLLKSLKKENRVIVFFESPERLLSTLRDILEIIGDREVFIAREMTKLHQEFFRGKVSEAISHFEKKKPLGEITVVLSGKE</sequence>
<reference key="1">
    <citation type="journal article" date="1999" name="Nature">
        <title>Evidence for lateral gene transfer between Archaea and Bacteria from genome sequence of Thermotoga maritima.</title>
        <authorList>
            <person name="Nelson K.E."/>
            <person name="Clayton R.A."/>
            <person name="Gill S.R."/>
            <person name="Gwinn M.L."/>
            <person name="Dodson R.J."/>
            <person name="Haft D.H."/>
            <person name="Hickey E.K."/>
            <person name="Peterson J.D."/>
            <person name="Nelson W.C."/>
            <person name="Ketchum K.A."/>
            <person name="McDonald L.A."/>
            <person name="Utterback T.R."/>
            <person name="Malek J.A."/>
            <person name="Linher K.D."/>
            <person name="Garrett M.M."/>
            <person name="Stewart A.M."/>
            <person name="Cotton M.D."/>
            <person name="Pratt M.S."/>
            <person name="Phillips C.A."/>
            <person name="Richardson D.L."/>
            <person name="Heidelberg J.F."/>
            <person name="Sutton G.G."/>
            <person name="Fleischmann R.D."/>
            <person name="Eisen J.A."/>
            <person name="White O."/>
            <person name="Salzberg S.L."/>
            <person name="Smith H.O."/>
            <person name="Venter J.C."/>
            <person name="Fraser C.M."/>
        </authorList>
    </citation>
    <scope>NUCLEOTIDE SEQUENCE [LARGE SCALE GENOMIC DNA]</scope>
    <source>
        <strain>ATCC 43589 / DSM 3109 / JCM 10099 / NBRC 100826 / MSB8</strain>
    </source>
</reference>
<evidence type="ECO:0000255" key="1">
    <source>
        <dbReference type="HAMAP-Rule" id="MF_01877"/>
    </source>
</evidence>
<name>RSMI_THEMA</name>